<name>RL9_PSEPG</name>
<protein>
    <recommendedName>
        <fullName evidence="1">Large ribosomal subunit protein bL9</fullName>
    </recommendedName>
    <alternativeName>
        <fullName evidence="2">50S ribosomal protein L9</fullName>
    </alternativeName>
</protein>
<organism>
    <name type="scientific">Pseudomonas putida (strain GB-1)</name>
    <dbReference type="NCBI Taxonomy" id="76869"/>
    <lineage>
        <taxon>Bacteria</taxon>
        <taxon>Pseudomonadati</taxon>
        <taxon>Pseudomonadota</taxon>
        <taxon>Gammaproteobacteria</taxon>
        <taxon>Pseudomonadales</taxon>
        <taxon>Pseudomonadaceae</taxon>
        <taxon>Pseudomonas</taxon>
    </lineage>
</organism>
<reference key="1">
    <citation type="submission" date="2008-01" db="EMBL/GenBank/DDBJ databases">
        <title>Complete sequence of Pseudomonas putida GB-1.</title>
        <authorList>
            <consortium name="US DOE Joint Genome Institute"/>
            <person name="Copeland A."/>
            <person name="Lucas S."/>
            <person name="Lapidus A."/>
            <person name="Barry K."/>
            <person name="Glavina del Rio T."/>
            <person name="Dalin E."/>
            <person name="Tice H."/>
            <person name="Pitluck S."/>
            <person name="Bruce D."/>
            <person name="Goodwin L."/>
            <person name="Chertkov O."/>
            <person name="Brettin T."/>
            <person name="Detter J.C."/>
            <person name="Han C."/>
            <person name="Kuske C.R."/>
            <person name="Schmutz J."/>
            <person name="Larimer F."/>
            <person name="Land M."/>
            <person name="Hauser L."/>
            <person name="Kyrpides N."/>
            <person name="Kim E."/>
            <person name="McCarthy J.K."/>
            <person name="Richardson P."/>
        </authorList>
    </citation>
    <scope>NUCLEOTIDE SEQUENCE [LARGE SCALE GENOMIC DNA]</scope>
    <source>
        <strain>GB-1</strain>
    </source>
</reference>
<feature type="chain" id="PRO_1000081493" description="Large ribosomal subunit protein bL9">
    <location>
        <begin position="1"/>
        <end position="148"/>
    </location>
</feature>
<accession>B0KKY0</accession>
<gene>
    <name evidence="1" type="primary">rplI</name>
    <name type="ordered locus">PputGB1_4931</name>
</gene>
<comment type="function">
    <text evidence="1">Binds to the 23S rRNA.</text>
</comment>
<comment type="similarity">
    <text evidence="1">Belongs to the bacterial ribosomal protein bL9 family.</text>
</comment>
<evidence type="ECO:0000255" key="1">
    <source>
        <dbReference type="HAMAP-Rule" id="MF_00503"/>
    </source>
</evidence>
<evidence type="ECO:0000305" key="2"/>
<proteinExistence type="inferred from homology"/>
<sequence>MELILLEKVANLGNLGDKVKVKAGYGRNFLLPFGKATVANAANLAAFEERRAELEKAAADKKSSAESRAAQLAELEVTITATAGDEGKLFGSIGTHDIADALTASGVEVAKAEVRLPNGTIRQVGEYDVAVHLHSDVEATVRVVVVAA</sequence>
<dbReference type="EMBL" id="CP000926">
    <property type="protein sequence ID" value="ABZ00816.1"/>
    <property type="molecule type" value="Genomic_DNA"/>
</dbReference>
<dbReference type="RefSeq" id="WP_012274445.1">
    <property type="nucleotide sequence ID" value="NC_010322.1"/>
</dbReference>
<dbReference type="SMR" id="B0KKY0"/>
<dbReference type="KEGG" id="ppg:PputGB1_4931"/>
<dbReference type="eggNOG" id="COG0359">
    <property type="taxonomic scope" value="Bacteria"/>
</dbReference>
<dbReference type="HOGENOM" id="CLU_078938_4_1_6"/>
<dbReference type="Proteomes" id="UP000002157">
    <property type="component" value="Chromosome"/>
</dbReference>
<dbReference type="GO" id="GO:1990904">
    <property type="term" value="C:ribonucleoprotein complex"/>
    <property type="evidence" value="ECO:0007669"/>
    <property type="project" value="UniProtKB-KW"/>
</dbReference>
<dbReference type="GO" id="GO:0005840">
    <property type="term" value="C:ribosome"/>
    <property type="evidence" value="ECO:0007669"/>
    <property type="project" value="UniProtKB-KW"/>
</dbReference>
<dbReference type="GO" id="GO:0019843">
    <property type="term" value="F:rRNA binding"/>
    <property type="evidence" value="ECO:0007669"/>
    <property type="project" value="UniProtKB-UniRule"/>
</dbReference>
<dbReference type="GO" id="GO:0003735">
    <property type="term" value="F:structural constituent of ribosome"/>
    <property type="evidence" value="ECO:0007669"/>
    <property type="project" value="InterPro"/>
</dbReference>
<dbReference type="GO" id="GO:0006412">
    <property type="term" value="P:translation"/>
    <property type="evidence" value="ECO:0007669"/>
    <property type="project" value="UniProtKB-UniRule"/>
</dbReference>
<dbReference type="Gene3D" id="3.10.430.100">
    <property type="entry name" value="Ribosomal protein L9, C-terminal domain"/>
    <property type="match status" value="1"/>
</dbReference>
<dbReference type="Gene3D" id="3.40.5.10">
    <property type="entry name" value="Ribosomal protein L9, N-terminal domain"/>
    <property type="match status" value="1"/>
</dbReference>
<dbReference type="HAMAP" id="MF_00503">
    <property type="entry name" value="Ribosomal_bL9"/>
    <property type="match status" value="1"/>
</dbReference>
<dbReference type="InterPro" id="IPR000244">
    <property type="entry name" value="Ribosomal_bL9"/>
</dbReference>
<dbReference type="InterPro" id="IPR009027">
    <property type="entry name" value="Ribosomal_bL9/RNase_H1_N"/>
</dbReference>
<dbReference type="InterPro" id="IPR020594">
    <property type="entry name" value="Ribosomal_bL9_bac/chp"/>
</dbReference>
<dbReference type="InterPro" id="IPR020069">
    <property type="entry name" value="Ribosomal_bL9_C"/>
</dbReference>
<dbReference type="InterPro" id="IPR036791">
    <property type="entry name" value="Ribosomal_bL9_C_sf"/>
</dbReference>
<dbReference type="InterPro" id="IPR020070">
    <property type="entry name" value="Ribosomal_bL9_N"/>
</dbReference>
<dbReference type="InterPro" id="IPR036935">
    <property type="entry name" value="Ribosomal_bL9_N_sf"/>
</dbReference>
<dbReference type="NCBIfam" id="TIGR00158">
    <property type="entry name" value="L9"/>
    <property type="match status" value="1"/>
</dbReference>
<dbReference type="PANTHER" id="PTHR21368">
    <property type="entry name" value="50S RIBOSOMAL PROTEIN L9"/>
    <property type="match status" value="1"/>
</dbReference>
<dbReference type="Pfam" id="PF03948">
    <property type="entry name" value="Ribosomal_L9_C"/>
    <property type="match status" value="1"/>
</dbReference>
<dbReference type="Pfam" id="PF01281">
    <property type="entry name" value="Ribosomal_L9_N"/>
    <property type="match status" value="1"/>
</dbReference>
<dbReference type="SUPFAM" id="SSF55658">
    <property type="entry name" value="L9 N-domain-like"/>
    <property type="match status" value="1"/>
</dbReference>
<dbReference type="SUPFAM" id="SSF55653">
    <property type="entry name" value="Ribosomal protein L9 C-domain"/>
    <property type="match status" value="1"/>
</dbReference>
<dbReference type="PROSITE" id="PS00651">
    <property type="entry name" value="RIBOSOMAL_L9"/>
    <property type="match status" value="1"/>
</dbReference>
<keyword id="KW-0687">Ribonucleoprotein</keyword>
<keyword id="KW-0689">Ribosomal protein</keyword>
<keyword id="KW-0694">RNA-binding</keyword>
<keyword id="KW-0699">rRNA-binding</keyword>